<protein>
    <recommendedName>
        <fullName evidence="1">Transcription antitermination protein NusB</fullName>
    </recommendedName>
    <alternativeName>
        <fullName evidence="1">Antitermination factor NusB</fullName>
    </alternativeName>
</protein>
<keyword id="KW-0694">RNA-binding</keyword>
<keyword id="KW-0804">Transcription</keyword>
<keyword id="KW-0889">Transcription antitermination</keyword>
<keyword id="KW-0805">Transcription regulation</keyword>
<comment type="function">
    <text evidence="1">Involved in transcription antitermination. Required for transcription of ribosomal RNA (rRNA) genes. Binds specifically to the boxA antiterminator sequence of the ribosomal RNA (rrn) operons.</text>
</comment>
<comment type="similarity">
    <text evidence="1">Belongs to the NusB family.</text>
</comment>
<gene>
    <name evidence="1" type="primary">nusB</name>
    <name type="ordered locus">KPK_4316</name>
</gene>
<reference key="1">
    <citation type="journal article" date="2008" name="PLoS Genet.">
        <title>Complete genome sequence of the N2-fixing broad host range endophyte Klebsiella pneumoniae 342 and virulence predictions verified in mice.</title>
        <authorList>
            <person name="Fouts D.E."/>
            <person name="Tyler H.L."/>
            <person name="DeBoy R.T."/>
            <person name="Daugherty S."/>
            <person name="Ren Q."/>
            <person name="Badger J.H."/>
            <person name="Durkin A.S."/>
            <person name="Huot H."/>
            <person name="Shrivastava S."/>
            <person name="Kothari S."/>
            <person name="Dodson R.J."/>
            <person name="Mohamoud Y."/>
            <person name="Khouri H."/>
            <person name="Roesch L.F.W."/>
            <person name="Krogfelt K.A."/>
            <person name="Struve C."/>
            <person name="Triplett E.W."/>
            <person name="Methe B.A."/>
        </authorList>
    </citation>
    <scope>NUCLEOTIDE SEQUENCE [LARGE SCALE GENOMIC DNA]</scope>
    <source>
        <strain>342</strain>
    </source>
</reference>
<proteinExistence type="inferred from homology"/>
<evidence type="ECO:0000255" key="1">
    <source>
        <dbReference type="HAMAP-Rule" id="MF_00073"/>
    </source>
</evidence>
<organism>
    <name type="scientific">Klebsiella pneumoniae (strain 342)</name>
    <dbReference type="NCBI Taxonomy" id="507522"/>
    <lineage>
        <taxon>Bacteria</taxon>
        <taxon>Pseudomonadati</taxon>
        <taxon>Pseudomonadota</taxon>
        <taxon>Gammaproteobacteria</taxon>
        <taxon>Enterobacterales</taxon>
        <taxon>Enterobacteriaceae</taxon>
        <taxon>Klebsiella/Raoultella group</taxon>
        <taxon>Klebsiella</taxon>
        <taxon>Klebsiella pneumoniae complex</taxon>
    </lineage>
</organism>
<sequence length="139" mass="15783">MKPAARRRARECAVQALYSWQLSHNDIADVEYQFLAEQDVKDVDVLYFRELLSGVATNSAYLDGLMKPYLSRQLEELGQVEKAVLRIALFELSKRDDVPYKVAINEAIELAKTFGAEDSHKFVNGVLDKAAPVIRPRKK</sequence>
<accession>B5Y0X5</accession>
<name>NUSB_KLEP3</name>
<dbReference type="EMBL" id="CP000964">
    <property type="protein sequence ID" value="ACI08025.1"/>
    <property type="molecule type" value="Genomic_DNA"/>
</dbReference>
<dbReference type="SMR" id="B5Y0X5"/>
<dbReference type="KEGG" id="kpe:KPK_4316"/>
<dbReference type="HOGENOM" id="CLU_087843_4_1_6"/>
<dbReference type="Proteomes" id="UP000001734">
    <property type="component" value="Chromosome"/>
</dbReference>
<dbReference type="GO" id="GO:0005829">
    <property type="term" value="C:cytosol"/>
    <property type="evidence" value="ECO:0007669"/>
    <property type="project" value="TreeGrafter"/>
</dbReference>
<dbReference type="GO" id="GO:0003723">
    <property type="term" value="F:RNA binding"/>
    <property type="evidence" value="ECO:0007669"/>
    <property type="project" value="UniProtKB-UniRule"/>
</dbReference>
<dbReference type="GO" id="GO:0006353">
    <property type="term" value="P:DNA-templated transcription termination"/>
    <property type="evidence" value="ECO:0007669"/>
    <property type="project" value="UniProtKB-UniRule"/>
</dbReference>
<dbReference type="GO" id="GO:0031564">
    <property type="term" value="P:transcription antitermination"/>
    <property type="evidence" value="ECO:0007669"/>
    <property type="project" value="UniProtKB-KW"/>
</dbReference>
<dbReference type="CDD" id="cd00619">
    <property type="entry name" value="Terminator_NusB"/>
    <property type="match status" value="1"/>
</dbReference>
<dbReference type="FunFam" id="1.10.940.10:FF:000001">
    <property type="entry name" value="Transcription antitermination factor NusB"/>
    <property type="match status" value="1"/>
</dbReference>
<dbReference type="Gene3D" id="1.10.940.10">
    <property type="entry name" value="NusB-like"/>
    <property type="match status" value="1"/>
</dbReference>
<dbReference type="HAMAP" id="MF_00073">
    <property type="entry name" value="NusB"/>
    <property type="match status" value="1"/>
</dbReference>
<dbReference type="InterPro" id="IPR035926">
    <property type="entry name" value="NusB-like_sf"/>
</dbReference>
<dbReference type="InterPro" id="IPR011605">
    <property type="entry name" value="NusB_fam"/>
</dbReference>
<dbReference type="InterPro" id="IPR006027">
    <property type="entry name" value="NusB_RsmB_TIM44"/>
</dbReference>
<dbReference type="NCBIfam" id="TIGR01951">
    <property type="entry name" value="nusB"/>
    <property type="match status" value="1"/>
</dbReference>
<dbReference type="PANTHER" id="PTHR11078:SF3">
    <property type="entry name" value="ANTITERMINATION NUSB DOMAIN-CONTAINING PROTEIN"/>
    <property type="match status" value="1"/>
</dbReference>
<dbReference type="PANTHER" id="PTHR11078">
    <property type="entry name" value="N UTILIZATION SUBSTANCE PROTEIN B-RELATED"/>
    <property type="match status" value="1"/>
</dbReference>
<dbReference type="Pfam" id="PF01029">
    <property type="entry name" value="NusB"/>
    <property type="match status" value="1"/>
</dbReference>
<dbReference type="SUPFAM" id="SSF48013">
    <property type="entry name" value="NusB-like"/>
    <property type="match status" value="1"/>
</dbReference>
<feature type="chain" id="PRO_1000092560" description="Transcription antitermination protein NusB">
    <location>
        <begin position="1"/>
        <end position="139"/>
    </location>
</feature>